<gene>
    <name evidence="6" type="primary">HAR1</name>
    <name evidence="8" type="ORF">CM0216.560.nc</name>
</gene>
<feature type="signal peptide" evidence="1">
    <location>
        <begin position="1"/>
        <end position="25"/>
    </location>
</feature>
<feature type="chain" id="PRO_0000448629" description="Leucine-rich repeat receptor-like kinase protein HAR1" evidence="1">
    <location>
        <begin position="26"/>
        <end position="986"/>
    </location>
</feature>
<feature type="transmembrane region" description="Helical" evidence="1">
    <location>
        <begin position="645"/>
        <end position="665"/>
    </location>
</feature>
<feature type="repeat" description="LRR 1" evidence="1">
    <location>
        <begin position="71"/>
        <end position="97"/>
    </location>
</feature>
<feature type="repeat" description="LRR 2" evidence="1">
    <location>
        <begin position="98"/>
        <end position="121"/>
    </location>
</feature>
<feature type="repeat" description="LRR 3" evidence="1">
    <location>
        <begin position="123"/>
        <end position="145"/>
    </location>
</feature>
<feature type="repeat" description="LRR 4" evidence="1">
    <location>
        <begin position="146"/>
        <end position="170"/>
    </location>
</feature>
<feature type="repeat" description="LRR 5" evidence="1">
    <location>
        <begin position="171"/>
        <end position="196"/>
    </location>
</feature>
<feature type="repeat" description="LRR 6" evidence="1">
    <location>
        <begin position="198"/>
        <end position="218"/>
    </location>
</feature>
<feature type="repeat" description="LRR 7" evidence="1">
    <location>
        <begin position="243"/>
        <end position="267"/>
    </location>
</feature>
<feature type="repeat" description="LRR 8" evidence="1">
    <location>
        <begin position="268"/>
        <end position="291"/>
    </location>
</feature>
<feature type="repeat" description="LRR 9" evidence="1">
    <location>
        <begin position="293"/>
        <end position="314"/>
    </location>
</feature>
<feature type="repeat" description="LRR 10" evidence="1">
    <location>
        <begin position="316"/>
        <end position="339"/>
    </location>
</feature>
<feature type="repeat" description="LRR 11" evidence="1">
    <location>
        <begin position="340"/>
        <end position="363"/>
    </location>
</feature>
<feature type="repeat" description="LRR 12" evidence="1">
    <location>
        <begin position="365"/>
        <end position="387"/>
    </location>
</feature>
<feature type="repeat" description="LRR 13" evidence="1">
    <location>
        <begin position="388"/>
        <end position="411"/>
    </location>
</feature>
<feature type="repeat" description="LRR 14" evidence="1">
    <location>
        <begin position="412"/>
        <end position="435"/>
    </location>
</feature>
<feature type="repeat" description="LRR 15" evidence="1">
    <location>
        <begin position="437"/>
        <end position="458"/>
    </location>
</feature>
<feature type="repeat" description="LRR 16" evidence="1">
    <location>
        <begin position="459"/>
        <end position="482"/>
    </location>
</feature>
<feature type="repeat" description="LRR 17" evidence="1">
    <location>
        <begin position="483"/>
        <end position="506"/>
    </location>
</feature>
<feature type="repeat" description="LRR 18" evidence="1">
    <location>
        <begin position="508"/>
        <end position="530"/>
    </location>
</feature>
<feature type="repeat" description="LRR 19" evidence="1">
    <location>
        <begin position="531"/>
        <end position="554"/>
    </location>
</feature>
<feature type="repeat" description="LRR 20" evidence="1">
    <location>
        <begin position="555"/>
        <end position="578"/>
    </location>
</feature>
<feature type="repeat" description="LRR 21" evidence="1">
    <location>
        <begin position="579"/>
        <end position="603"/>
    </location>
</feature>
<feature type="domain" description="Protein kinase" evidence="2">
    <location>
        <begin position="695"/>
        <end position="971"/>
    </location>
</feature>
<feature type="active site" description="Proton acceptor" evidence="2">
    <location>
        <position position="820"/>
    </location>
</feature>
<feature type="binding site" evidence="2">
    <location>
        <begin position="701"/>
        <end position="709"/>
    </location>
    <ligand>
        <name>ATP</name>
        <dbReference type="ChEBI" id="CHEBI:30616"/>
    </ligand>
</feature>
<feature type="binding site" evidence="2">
    <location>
        <position position="723"/>
    </location>
    <ligand>
        <name>ATP</name>
        <dbReference type="ChEBI" id="CHEBI:30616"/>
    </ligand>
</feature>
<feature type="glycosylation site" description="N-linked (GlcNAc...) asparagine" evidence="3">
    <location>
        <position position="80"/>
    </location>
</feature>
<feature type="glycosylation site" description="N-linked (GlcNAc...) asparagine" evidence="3">
    <location>
        <position position="102"/>
    </location>
</feature>
<feature type="glycosylation site" description="N-linked (GlcNAc...) asparagine" evidence="3">
    <location>
        <position position="109"/>
    </location>
</feature>
<feature type="glycosylation site" description="N-linked (GlcNAc...) asparagine" evidence="3">
    <location>
        <position position="128"/>
    </location>
</feature>
<feature type="glycosylation site" description="N-linked (GlcNAc...) asparagine" evidence="3">
    <location>
        <position position="141"/>
    </location>
</feature>
<feature type="glycosylation site" description="N-linked (GlcNAc...) asparagine" evidence="3">
    <location>
        <position position="255"/>
    </location>
</feature>
<feature type="glycosylation site" description="N-linked (GlcNAc...) asparagine" evidence="3">
    <location>
        <position position="266"/>
    </location>
</feature>
<feature type="glycosylation site" description="N-linked (GlcNAc...) asparagine" evidence="3">
    <location>
        <position position="279"/>
    </location>
</feature>
<feature type="glycosylation site" description="N-linked (GlcNAc...) asparagine" evidence="3">
    <location>
        <position position="317"/>
    </location>
</feature>
<feature type="glycosylation site" description="N-linked (GlcNAc...) asparagine" evidence="3">
    <location>
        <position position="351"/>
    </location>
</feature>
<feature type="glycosylation site" description="N-linked (GlcNAc...) asparagine" evidence="3">
    <location>
        <position position="513"/>
    </location>
</feature>
<feature type="glycosylation site" description="N-linked (GlcNAc...) asparagine" evidence="3">
    <location>
        <position position="518"/>
    </location>
</feature>
<feature type="glycosylation site" description="N-linked (GlcNAc...) asparagine" evidence="3">
    <location>
        <position position="561"/>
    </location>
</feature>
<feature type="glycosylation site" description="N-linked (GlcNAc...) asparagine" evidence="3">
    <location>
        <position position="590"/>
    </location>
</feature>
<feature type="mutagenesis site" description="In har1-5; increased number of root nodules when inoculated with Mesorhizobium loti; inhibition of shoot and root growth; increase in arbuscular mycorrhizal (AM) fungus colonization intensity in roots (enhanced mycorrhizal phenotype) when inoculated with AM fungi." evidence="5">
    <original>E</original>
    <variation>K</variation>
    <location>
        <position position="740"/>
    </location>
</feature>
<evidence type="ECO:0000255" key="1"/>
<evidence type="ECO:0000255" key="2">
    <source>
        <dbReference type="PROSITE-ProRule" id="PRU00159"/>
    </source>
</evidence>
<evidence type="ECO:0000255" key="3">
    <source>
        <dbReference type="PROSITE-ProRule" id="PRU00498"/>
    </source>
</evidence>
<evidence type="ECO:0000269" key="4">
    <source>
    </source>
</evidence>
<evidence type="ECO:0000269" key="5">
    <source>
    </source>
</evidence>
<evidence type="ECO:0000303" key="6">
    <source>
    </source>
</evidence>
<evidence type="ECO:0000305" key="7"/>
<evidence type="ECO:0000312" key="8">
    <source>
        <dbReference type="EMBL" id="BAF98590.1"/>
    </source>
</evidence>
<name>HAR1_LOTJA</name>
<accession>Q8GRU6</accession>
<reference key="1">
    <citation type="journal article" date="2002" name="Nature">
        <title>Shoot control of root development and nodulation is mediated by a receptor-like kinase.</title>
        <authorList>
            <person name="Krusell L."/>
            <person name="Madsen L.H."/>
            <person name="Sato S."/>
            <person name="Aubert G."/>
            <person name="Genua A."/>
            <person name="Szczyglowski K."/>
            <person name="Duc G."/>
            <person name="Kaneko T."/>
            <person name="Tabata S."/>
            <person name="de Bruijn F."/>
            <person name="Pajuelo E."/>
            <person name="Sandal N."/>
            <person name="Stougaard J."/>
        </authorList>
    </citation>
    <scope>NUCLEOTIDE SEQUENCE [GENOMIC DNA / MRNA]</scope>
</reference>
<reference key="2">
    <citation type="journal article" date="2002" name="Nature">
        <title>HAR1 mediates systemic regulation of symbiotic organ development.</title>
        <authorList>
            <person name="Nishimura R."/>
            <person name="Hayashi M."/>
            <person name="Wu G.-J."/>
            <person name="Kouchi H."/>
            <person name="Imaizumi-Anraku H."/>
            <person name="Murakami Y."/>
            <person name="Kawasaki S."/>
            <person name="Akao S."/>
            <person name="Ohmori M."/>
            <person name="Nagasawa M."/>
            <person name="Harada K."/>
            <person name="Kawaguchi M."/>
        </authorList>
    </citation>
    <scope>NUCLEOTIDE SEQUENCE [GENOMIC DNA / MRNA]</scope>
    <scope>FUNCTION</scope>
    <scope>TISSUE SPECIFICITY</scope>
    <scope>DISRUPTION PHENOTYPE</scope>
    <scope>MUTAGENESIS OF GLU-740</scope>
</reference>
<reference key="3">
    <citation type="journal article" date="2008" name="DNA Res.">
        <title>Genome structure of the legume, Lotus japonicus.</title>
        <authorList>
            <person name="Sato S."/>
            <person name="Nakamura Y."/>
            <person name="Kaneko T."/>
            <person name="Asamizu E."/>
            <person name="Kato T."/>
            <person name="Nakao M."/>
            <person name="Sasamoto S."/>
            <person name="Watanabe A."/>
            <person name="Ono A."/>
            <person name="Kawashima K."/>
            <person name="Fujishiro T."/>
            <person name="Katoh M."/>
            <person name="Kohara M."/>
            <person name="Kishida Y."/>
            <person name="Minami C."/>
            <person name="Nakayama S."/>
            <person name="Nakazaki N."/>
            <person name="Shimizu Y."/>
            <person name="Shinpo S."/>
            <person name="Takahashi C."/>
            <person name="Wada T."/>
            <person name="Yamada M."/>
            <person name="Ohmido N."/>
            <person name="Hayashi M."/>
            <person name="Fukui K."/>
            <person name="Baba T."/>
            <person name="Nakamichi T."/>
            <person name="Mori H."/>
            <person name="Tabata S."/>
        </authorList>
    </citation>
    <scope>NUCLEOTIDE SEQUENCE [LARGE SCALE GENOMIC DNA]</scope>
    <source>
        <strain>cv. Miyakojima MG-20</strain>
    </source>
</reference>
<organism>
    <name type="scientific">Lotus japonicus</name>
    <name type="common">Lotus corniculatus var. japonicus</name>
    <dbReference type="NCBI Taxonomy" id="34305"/>
    <lineage>
        <taxon>Eukaryota</taxon>
        <taxon>Viridiplantae</taxon>
        <taxon>Streptophyta</taxon>
        <taxon>Embryophyta</taxon>
        <taxon>Tracheophyta</taxon>
        <taxon>Spermatophyta</taxon>
        <taxon>Magnoliopsida</taxon>
        <taxon>eudicotyledons</taxon>
        <taxon>Gunneridae</taxon>
        <taxon>Pentapetalae</taxon>
        <taxon>rosids</taxon>
        <taxon>fabids</taxon>
        <taxon>Fabales</taxon>
        <taxon>Fabaceae</taxon>
        <taxon>Papilionoideae</taxon>
        <taxon>50 kb inversion clade</taxon>
        <taxon>NPAAA clade</taxon>
        <taxon>Hologalegina</taxon>
        <taxon>robinioid clade</taxon>
        <taxon>Loteae</taxon>
        <taxon>Lotus</taxon>
    </lineage>
</organism>
<protein>
    <recommendedName>
        <fullName evidence="7">Leucine-rich repeat receptor-like kinase protein HAR1</fullName>
        <ecNumber evidence="7">2.7.11.1</ecNumber>
    </recommendedName>
    <alternativeName>
        <fullName evidence="6">Protein HYPERNODULATION ABERRANT ROOT FORMATION 1</fullName>
    </alternativeName>
</protein>
<dbReference type="EC" id="2.7.11.1" evidence="7"/>
<dbReference type="EMBL" id="AJ495843">
    <property type="protein sequence ID" value="CAD42335.1"/>
    <property type="molecule type" value="Genomic_DNA"/>
</dbReference>
<dbReference type="EMBL" id="AJ495844">
    <property type="protein sequence ID" value="CAD42336.1"/>
    <property type="molecule type" value="mRNA"/>
</dbReference>
<dbReference type="EMBL" id="AJ580824">
    <property type="protein sequence ID" value="CAE45593.1"/>
    <property type="molecule type" value="Genomic_DNA"/>
</dbReference>
<dbReference type="EMBL" id="AB092809">
    <property type="protein sequence ID" value="BAC41327.1"/>
    <property type="molecule type" value="Genomic_DNA"/>
</dbReference>
<dbReference type="EMBL" id="AB092810">
    <property type="protein sequence ID" value="BAC41331.1"/>
    <property type="molecule type" value="mRNA"/>
</dbReference>
<dbReference type="EMBL" id="AP005667">
    <property type="protein sequence ID" value="BAF98590.1"/>
    <property type="molecule type" value="Genomic_DNA"/>
</dbReference>
<dbReference type="SMR" id="Q8GRU6"/>
<dbReference type="GlyCosmos" id="Q8GRU6">
    <property type="glycosylation" value="14 sites, No reported glycans"/>
</dbReference>
<dbReference type="GO" id="GO:0005886">
    <property type="term" value="C:plasma membrane"/>
    <property type="evidence" value="ECO:0007669"/>
    <property type="project" value="UniProtKB-SubCell"/>
</dbReference>
<dbReference type="GO" id="GO:0005524">
    <property type="term" value="F:ATP binding"/>
    <property type="evidence" value="ECO:0007669"/>
    <property type="project" value="UniProtKB-KW"/>
</dbReference>
<dbReference type="GO" id="GO:0106310">
    <property type="term" value="F:protein serine kinase activity"/>
    <property type="evidence" value="ECO:0007669"/>
    <property type="project" value="RHEA"/>
</dbReference>
<dbReference type="GO" id="GO:0004674">
    <property type="term" value="F:protein serine/threonine kinase activity"/>
    <property type="evidence" value="ECO:0007669"/>
    <property type="project" value="UniProtKB-KW"/>
</dbReference>
<dbReference type="GO" id="GO:0033612">
    <property type="term" value="F:receptor serine/threonine kinase binding"/>
    <property type="evidence" value="ECO:0007669"/>
    <property type="project" value="TreeGrafter"/>
</dbReference>
<dbReference type="GO" id="GO:0030154">
    <property type="term" value="P:cell differentiation"/>
    <property type="evidence" value="ECO:0007669"/>
    <property type="project" value="UniProtKB-KW"/>
</dbReference>
<dbReference type="FunFam" id="3.80.10.10:FF:000275">
    <property type="entry name" value="Leucine-rich repeat receptor-like protein kinase"/>
    <property type="match status" value="1"/>
</dbReference>
<dbReference type="FunFam" id="3.80.10.10:FF:000896">
    <property type="entry name" value="Leucine-rich repeat receptor-like protein kinase"/>
    <property type="match status" value="1"/>
</dbReference>
<dbReference type="FunFam" id="3.80.10.10:FF:000233">
    <property type="entry name" value="Leucine-rich repeat receptor-like protein kinase TDR"/>
    <property type="match status" value="1"/>
</dbReference>
<dbReference type="FunFam" id="1.10.510.10:FF:000201">
    <property type="entry name" value="Leucine-rich repeat receptor-like serine/threonine-protein kinase"/>
    <property type="match status" value="1"/>
</dbReference>
<dbReference type="FunFam" id="3.30.200.20:FF:000292">
    <property type="entry name" value="Leucine-rich repeat receptor-like serine/threonine-protein kinase BAM1"/>
    <property type="match status" value="1"/>
</dbReference>
<dbReference type="Gene3D" id="3.30.200.20">
    <property type="entry name" value="Phosphorylase Kinase, domain 1"/>
    <property type="match status" value="1"/>
</dbReference>
<dbReference type="Gene3D" id="3.80.10.10">
    <property type="entry name" value="Ribonuclease Inhibitor"/>
    <property type="match status" value="4"/>
</dbReference>
<dbReference type="Gene3D" id="1.10.510.10">
    <property type="entry name" value="Transferase(Phosphotransferase) domain 1"/>
    <property type="match status" value="1"/>
</dbReference>
<dbReference type="InterPro" id="IPR011009">
    <property type="entry name" value="Kinase-like_dom_sf"/>
</dbReference>
<dbReference type="InterPro" id="IPR001611">
    <property type="entry name" value="Leu-rich_rpt"/>
</dbReference>
<dbReference type="InterPro" id="IPR003591">
    <property type="entry name" value="Leu-rich_rpt_typical-subtyp"/>
</dbReference>
<dbReference type="InterPro" id="IPR032675">
    <property type="entry name" value="LRR_dom_sf"/>
</dbReference>
<dbReference type="InterPro" id="IPR013210">
    <property type="entry name" value="LRR_N_plant-typ"/>
</dbReference>
<dbReference type="InterPro" id="IPR050647">
    <property type="entry name" value="Plant_LRR-RLKs"/>
</dbReference>
<dbReference type="InterPro" id="IPR000719">
    <property type="entry name" value="Prot_kinase_dom"/>
</dbReference>
<dbReference type="InterPro" id="IPR008271">
    <property type="entry name" value="Ser/Thr_kinase_AS"/>
</dbReference>
<dbReference type="PANTHER" id="PTHR48056">
    <property type="entry name" value="LRR RECEPTOR-LIKE SERINE/THREONINE-PROTEIN KINASE-RELATED"/>
    <property type="match status" value="1"/>
</dbReference>
<dbReference type="PANTHER" id="PTHR48056:SF44">
    <property type="entry name" value="RECEPTOR PROTEIN KINASE CLAVATA1"/>
    <property type="match status" value="1"/>
</dbReference>
<dbReference type="Pfam" id="PF00560">
    <property type="entry name" value="LRR_1"/>
    <property type="match status" value="6"/>
</dbReference>
<dbReference type="Pfam" id="PF13855">
    <property type="entry name" value="LRR_8"/>
    <property type="match status" value="1"/>
</dbReference>
<dbReference type="Pfam" id="PF08263">
    <property type="entry name" value="LRRNT_2"/>
    <property type="match status" value="1"/>
</dbReference>
<dbReference type="Pfam" id="PF00069">
    <property type="entry name" value="Pkinase"/>
    <property type="match status" value="1"/>
</dbReference>
<dbReference type="SMART" id="SM00369">
    <property type="entry name" value="LRR_TYP"/>
    <property type="match status" value="5"/>
</dbReference>
<dbReference type="SMART" id="SM00220">
    <property type="entry name" value="S_TKc"/>
    <property type="match status" value="1"/>
</dbReference>
<dbReference type="SUPFAM" id="SSF56112">
    <property type="entry name" value="Protein kinase-like (PK-like)"/>
    <property type="match status" value="1"/>
</dbReference>
<dbReference type="SUPFAM" id="SSF52047">
    <property type="entry name" value="RNI-like"/>
    <property type="match status" value="2"/>
</dbReference>
<dbReference type="PROSITE" id="PS50011">
    <property type="entry name" value="PROTEIN_KINASE_DOM"/>
    <property type="match status" value="1"/>
</dbReference>
<dbReference type="PROSITE" id="PS00108">
    <property type="entry name" value="PROTEIN_KINASE_ST"/>
    <property type="match status" value="1"/>
</dbReference>
<sequence>MRIRVSYLLVLCFTLIWFRWTVVYSSFSDLDALLKLKESMKGAKAKHHALEDWKFSTSLSAHCSFSGVTCDQNLRVVALNVTLVPLFGHLPPEIGLLEKLENLTISMNNLTDQLPSDLASLTSLKVLNISHNLFSGQFPGNITVGMTELEALDAYDNSFSGPLPEEIVKLEKLKYLHLAGNYFSGTIPESYSEFQSLEFLGLNANSLTGRVPESLAKLKTLKELHLGYSNAYEGGIPPAFGSMENLRLLEMANCNLTGEIPPSLGNLTKLHSLFVQMNNLTGTIPPELSSMMSLMSLDLSINDLTGEIPESFSKLKNLTLMNFFQNKFRGSLPSFIGDLPNLETLQVWENNFSFVLPHNLGGNGRFLYFDVTKNHLTGLIPPDLCKSGRLKTFIITDNFFRGPIPKGIGECRSLTKIRVANNFLDGPVPPGVFQLPSVTITELSNNRLNGELPSVISGESLGTLTLSNNLFTGKIPAAMKNLRALQSLSLDANEFIGEIPGGVFEIPMLTKVNISGNNLTGPIPTTITHRASLTAVDLSRNNLAGEVPKGMKNLMDLSILNLSRNEISGPVPDEIRFMTSLTTLDLSSNNFTGTVPTGGQFLVFNYDKTFAGNPNLCFPHRASCPSVLYDSLRKTRAKTARVRAIVIGIALATAVLLVAVTVHVVRKRRLHRAQAWKLTAFQRLEIKAEDVVECLKEENIIGKGGAGIVYRGSMPNGTDVAIKRLVGQGSGRNDYGFRAEIETLGKIRHRNIMRLLGYVSNKDTNLLLYEYMPNGSLGEWLHGAKGGHLRWEMRYKIAVEAARGLCYMHHDCSPLIIHRDVKSNNILLDADFEAHVADFGLAKFLYDPGASQSMSSIAGSYGYIAPEYAYTLKVDEKSDVYSFGVVLLELIIGRKPVGEFGDGVDIVGWVNKTMSELSQPSDTALVLAVVDPRLSGYPLTSVIHMFNIAMMCVKEMGPARPTMREVVHMLTNPPQSNTSTQDLINL</sequence>
<proteinExistence type="evidence at protein level"/>
<comment type="function">
    <text evidence="4 5">LRR receptor kinase involved in the regulation of root and shoot growth, and root nodule organogenesis (PubMed:12442170, PubMed:12442172). Involved in long distance nodulation signaling events (PubMed:12442170, PubMed:12442172). Involved in the autoregulation of nodulation (AON), a long distance systemic signaling from root to shoot and back again, which allows legumes to limit the number of root nodules formed based on available nitrogen and previous rhizobial colonization (PubMed:12442170, PubMed:12442172). Acts from shoot to root to control AON (PubMed:12442170, PubMed:12442172). Involved in the regulation of root colonization by arbuscular mycorrhizal (AM) fungi (PubMed:12442170, PubMed:12442172).</text>
</comment>
<comment type="catalytic activity">
    <reaction evidence="7">
        <text>L-seryl-[protein] + ATP = O-phospho-L-seryl-[protein] + ADP + H(+)</text>
        <dbReference type="Rhea" id="RHEA:17989"/>
        <dbReference type="Rhea" id="RHEA-COMP:9863"/>
        <dbReference type="Rhea" id="RHEA-COMP:11604"/>
        <dbReference type="ChEBI" id="CHEBI:15378"/>
        <dbReference type="ChEBI" id="CHEBI:29999"/>
        <dbReference type="ChEBI" id="CHEBI:30616"/>
        <dbReference type="ChEBI" id="CHEBI:83421"/>
        <dbReference type="ChEBI" id="CHEBI:456216"/>
        <dbReference type="EC" id="2.7.11.1"/>
    </reaction>
    <physiologicalReaction direction="left-to-right" evidence="7">
        <dbReference type="Rhea" id="RHEA:17990"/>
    </physiologicalReaction>
</comment>
<comment type="catalytic activity">
    <reaction evidence="7">
        <text>L-threonyl-[protein] + ATP = O-phospho-L-threonyl-[protein] + ADP + H(+)</text>
        <dbReference type="Rhea" id="RHEA:46608"/>
        <dbReference type="Rhea" id="RHEA-COMP:11060"/>
        <dbReference type="Rhea" id="RHEA-COMP:11605"/>
        <dbReference type="ChEBI" id="CHEBI:15378"/>
        <dbReference type="ChEBI" id="CHEBI:30013"/>
        <dbReference type="ChEBI" id="CHEBI:30616"/>
        <dbReference type="ChEBI" id="CHEBI:61977"/>
        <dbReference type="ChEBI" id="CHEBI:456216"/>
        <dbReference type="EC" id="2.7.11.1"/>
    </reaction>
    <physiologicalReaction direction="left-to-right" evidence="7">
        <dbReference type="Rhea" id="RHEA:46609"/>
    </physiologicalReaction>
</comment>
<comment type="subcellular location">
    <subcellularLocation>
        <location evidence="7">Cell membrane</location>
        <topology evidence="7">Single-pass type I membrane protein</topology>
    </subcellularLocation>
</comment>
<comment type="tissue specificity">
    <text evidence="5">Expressed in roots, leaves, stems and flowers.</text>
</comment>
<comment type="disruption phenotype">
    <text evidence="4 5">Increased number of root nodules when inoculated with Mesorhizobium loti (PubMed:12442170, PubMed:12442172). Inhibition of shoot and root growth (PubMed:12442170, PubMed:12442172). Increase in arbuscular mycorrhizal (AM) fungus colonization intensity in roots (enhanced mycorrhizal phenotype) when inoculated with AM fungi (PubMed:12442170, PubMed:12442172).</text>
</comment>
<comment type="similarity">
    <text evidence="2">Belongs to the protein kinase superfamily. Ser/Thr protein kinase family.</text>
</comment>
<keyword id="KW-0067">ATP-binding</keyword>
<keyword id="KW-1003">Cell membrane</keyword>
<keyword id="KW-0221">Differentiation</keyword>
<keyword id="KW-0325">Glycoprotein</keyword>
<keyword id="KW-0341">Growth regulation</keyword>
<keyword id="KW-0418">Kinase</keyword>
<keyword id="KW-0433">Leucine-rich repeat</keyword>
<keyword id="KW-0472">Membrane</keyword>
<keyword id="KW-0547">Nucleotide-binding</keyword>
<keyword id="KW-0675">Receptor</keyword>
<keyword id="KW-0677">Repeat</keyword>
<keyword id="KW-0723">Serine/threonine-protein kinase</keyword>
<keyword id="KW-0732">Signal</keyword>
<keyword id="KW-0808">Transferase</keyword>
<keyword id="KW-0812">Transmembrane</keyword>
<keyword id="KW-1133">Transmembrane helix</keyword>